<sequence length="373" mass="39374">MAVDSLETEIDTAVRVVHLASSLCVKVQEKLHLPNGGHVKSKDDDSPVTVADFGVQAIVSWVLAEVFGDQNLSIVAEEDTETLSEADSLGLLGAVSNAVNEALSEAQNYGLPKPVKPLGSSEILKAISRCNSVGGPKGRHWVLDPVDGTLGFVRGDQYAVALALIENGKVLLGVLGCPNYPVKKECLSNGCNQAMKTKAVAGSVSKGCVMYAKRGSGQAWMQPLIVGGIPESATLLKVSSVDDPVLATVCEPVERANSNHLFTAGLANSMGVRKQPMRVYSMVKYAAIARGDAEVFMKFAQSSYKEKIWDHAAGVVIVEEAGGVVTDAGGRNLDFSKGVYLEGLDRGIIACSGQVLHEKIIGAVYASWESSSL</sequence>
<feature type="chain" id="PRO_0000142534" description="3',5'-bisphosphate nucleotidase AHL">
    <location>
        <begin position="1"/>
        <end position="373"/>
    </location>
</feature>
<feature type="active site" description="Proton acceptor" evidence="1">
    <location>
        <position position="52"/>
    </location>
</feature>
<feature type="active site" description="Proton acceptor" evidence="1">
    <location>
        <position position="149"/>
    </location>
</feature>
<feature type="binding site" evidence="1">
    <location>
        <position position="77"/>
    </location>
    <ligand>
        <name>Mg(2+)</name>
        <dbReference type="ChEBI" id="CHEBI:18420"/>
        <label>1</label>
    </ligand>
</feature>
<feature type="binding site" evidence="1">
    <location>
        <position position="77"/>
    </location>
    <ligand>
        <name>Mg(2+)</name>
        <dbReference type="ChEBI" id="CHEBI:18420"/>
        <label>3</label>
    </ligand>
</feature>
<feature type="binding site" evidence="1">
    <location>
        <position position="144"/>
    </location>
    <ligand>
        <name>Mg(2+)</name>
        <dbReference type="ChEBI" id="CHEBI:18420"/>
        <label>1</label>
    </ligand>
</feature>
<feature type="binding site" evidence="1">
    <location>
        <position position="144"/>
    </location>
    <ligand>
        <name>Mg(2+)</name>
        <dbReference type="ChEBI" id="CHEBI:18420"/>
        <label>2</label>
    </ligand>
</feature>
<feature type="binding site" evidence="1">
    <location>
        <position position="146"/>
    </location>
    <ligand>
        <name>Mg(2+)</name>
        <dbReference type="ChEBI" id="CHEBI:18420"/>
        <label>1</label>
    </ligand>
</feature>
<feature type="binding site" evidence="1">
    <location>
        <position position="147"/>
    </location>
    <ligand>
        <name>Mg(2+)</name>
        <dbReference type="ChEBI" id="CHEBI:18420"/>
        <label>2</label>
    </ligand>
</feature>
<feature type="binding site" evidence="1">
    <location>
        <position position="149"/>
    </location>
    <ligand>
        <name>adenosine 3',5'-bisphosphate</name>
        <dbReference type="ChEBI" id="CHEBI:58343"/>
    </ligand>
</feature>
<feature type="binding site" evidence="1">
    <location>
        <position position="281"/>
    </location>
    <ligand>
        <name>adenosine 3',5'-bisphosphate</name>
        <dbReference type="ChEBI" id="CHEBI:58343"/>
    </ligand>
</feature>
<feature type="binding site" evidence="1">
    <location>
        <position position="281"/>
    </location>
    <ligand>
        <name>AMP</name>
        <dbReference type="ChEBI" id="CHEBI:456215"/>
    </ligand>
</feature>
<feature type="binding site" evidence="1">
    <location>
        <position position="284"/>
    </location>
    <ligand>
        <name>adenosine 3',5'-bisphosphate</name>
        <dbReference type="ChEBI" id="CHEBI:58343"/>
    </ligand>
</feature>
<feature type="binding site" evidence="1">
    <location>
        <position position="284"/>
    </location>
    <ligand>
        <name>AMP</name>
        <dbReference type="ChEBI" id="CHEBI:456215"/>
    </ligand>
</feature>
<feature type="binding site" evidence="1">
    <location>
        <position position="298"/>
    </location>
    <ligand>
        <name>adenosine 3',5'-bisphosphate</name>
        <dbReference type="ChEBI" id="CHEBI:58343"/>
    </ligand>
</feature>
<feature type="binding site" evidence="1">
    <location>
        <position position="298"/>
    </location>
    <ligand>
        <name>AMP</name>
        <dbReference type="ChEBI" id="CHEBI:456215"/>
    </ligand>
</feature>
<feature type="binding site" evidence="1">
    <location>
        <position position="310"/>
    </location>
    <ligand>
        <name>adenosine 3',5'-bisphosphate</name>
        <dbReference type="ChEBI" id="CHEBI:58343"/>
    </ligand>
</feature>
<feature type="binding site" evidence="1">
    <location>
        <position position="310"/>
    </location>
    <ligand>
        <name>AMP</name>
        <dbReference type="ChEBI" id="CHEBI:456215"/>
    </ligand>
</feature>
<feature type="binding site" evidence="1">
    <location>
        <position position="310"/>
    </location>
    <ligand>
        <name>Mg(2+)</name>
        <dbReference type="ChEBI" id="CHEBI:18420"/>
        <label>2</label>
    </ligand>
</feature>
<feature type="sequence conflict" description="In Ref. 2; AAB94051." evidence="6" ref="2">
    <original>QN</original>
    <variation>SK</variation>
    <location>
        <begin position="107"/>
        <end position="108"/>
    </location>
</feature>
<comment type="function">
    <text evidence="2 3">Phosphatase that converts adenosine 3'-phosphate 5'-phosphosulfate (PAPS) to adenosine 5'-phosphosulfate (APS) and 3'-phosphoadenosine 5'-phosphate (3'-PAP) to AMP (PubMed:10205895). May regulate the flux of sulfur in the sulfur-activation pathway by converting PAPS to APS (By similarity). Prevents both the toxicity of PAP on RNA processing enzymes as well as the product inhibition by PAP of sulfate conjugation.</text>
</comment>
<comment type="catalytic activity">
    <reaction evidence="3">
        <text>adenosine 3',5'-bisphosphate + H2O = AMP + phosphate</text>
        <dbReference type="Rhea" id="RHEA:10040"/>
        <dbReference type="ChEBI" id="CHEBI:15377"/>
        <dbReference type="ChEBI" id="CHEBI:43474"/>
        <dbReference type="ChEBI" id="CHEBI:58343"/>
        <dbReference type="ChEBI" id="CHEBI:456215"/>
        <dbReference type="EC" id="3.1.3.7"/>
    </reaction>
    <physiologicalReaction direction="left-to-right" evidence="7">
        <dbReference type="Rhea" id="RHEA:10041"/>
    </physiologicalReaction>
</comment>
<comment type="catalytic activity">
    <reaction evidence="3">
        <text>3'-phosphoadenylyl sulfate + H2O = adenosine 5'-phosphosulfate + phosphate</text>
        <dbReference type="Rhea" id="RHEA:77639"/>
        <dbReference type="ChEBI" id="CHEBI:15377"/>
        <dbReference type="ChEBI" id="CHEBI:43474"/>
        <dbReference type="ChEBI" id="CHEBI:58243"/>
        <dbReference type="ChEBI" id="CHEBI:58339"/>
        <dbReference type="EC" id="3.1.3.7"/>
    </reaction>
    <physiologicalReaction direction="left-to-right" evidence="7">
        <dbReference type="Rhea" id="RHEA:77640"/>
    </physiologicalReaction>
</comment>
<comment type="cofactor">
    <cofactor evidence="3">
        <name>Mg(2+)</name>
        <dbReference type="ChEBI" id="CHEBI:18420"/>
    </cofactor>
</comment>
<comment type="activity regulation">
    <text evidence="3">Inhibited by Li(+) (IC(50)=10 mM), Na(+) (IC(50)=50 mM) and Ca(2+) (IC(50)=0.06 mM).</text>
</comment>
<comment type="biophysicochemical properties">
    <kinetics>
        <KM evidence="3">160 uM for adenosine 3',5'-bisphosphate</KM>
    </kinetics>
</comment>
<comment type="tissue specificity">
    <text>Expressed in roots, leaves, stems, flowers and siliques.</text>
</comment>
<comment type="miscellaneous">
    <text evidence="3">Substrate preference is 3'-phosphoadenosine 5'-phosphate (3'-PAP) &gt; adenosine 3'-phosphate 5'-phosphosulfate (PAPS). No activity observed against 2'-PAP, 3' or 5'-AMP, inositol mono and diphosphates and fructose-1,6-bisphosphate.</text>
</comment>
<comment type="similarity">
    <text evidence="6">Belongs to the inositol monophosphatase superfamily.</text>
</comment>
<protein>
    <recommendedName>
        <fullName>3',5'-bisphosphate nucleotidase AHL</fullName>
        <ecNumber evidence="3">3.1.3.7</ecNumber>
    </recommendedName>
    <alternativeName>
        <fullName>3',5-bisphosphonucleoside 3'-phosphohydrolase</fullName>
    </alternativeName>
    <alternativeName>
        <fullName evidence="4">3'-phosphoadenosine-5'-phosphate phosphatase AHL</fullName>
        <shortName evidence="4">PAP phosphatase</shortName>
        <shortName evidence="4">PAPase</shortName>
    </alternativeName>
    <alternativeName>
        <fullName>DPNPase</fullName>
    </alternativeName>
    <alternativeName>
        <fullName>Halotolerance protein</fullName>
    </alternativeName>
    <alternativeName>
        <fullName>PAP-specific phosphatase HAL2-like</fullName>
        <shortName evidence="4">AtAHL</shortName>
    </alternativeName>
</protein>
<proteinExistence type="evidence at protein level"/>
<name>DPNPH_ARATH</name>
<evidence type="ECO:0000250" key="1">
    <source>
        <dbReference type="UniProtKB" id="P32179"/>
    </source>
</evidence>
<evidence type="ECO:0000250" key="2">
    <source>
        <dbReference type="UniProtKB" id="Q42546"/>
    </source>
</evidence>
<evidence type="ECO:0000269" key="3">
    <source>
    </source>
</evidence>
<evidence type="ECO:0000303" key="4">
    <source>
    </source>
</evidence>
<evidence type="ECO:0000303" key="5">
    <source ref="1"/>
</evidence>
<evidence type="ECO:0000305" key="6"/>
<evidence type="ECO:0000305" key="7">
    <source>
    </source>
</evidence>
<gene>
    <name evidence="5" type="primary">AHL</name>
    <name type="ordered locus">At5g54390</name>
    <name type="ORF">F24B18.1</name>
</gene>
<reference key="1">
    <citation type="online journal article" date="1996" name="Plant Gene Register">
        <title>A cDNA clone encoding Arabidopsis HAL2-like (AHL) protein.</title>
        <authorList>
            <person name="Cheong J.-J."/>
            <person name="Kwon H.-B."/>
            <person name="Goodman H.M."/>
        </authorList>
        <locator>PGR96-042</locator>
    </citation>
    <scope>NUCLEOTIDE SEQUENCE [MRNA]</scope>
    <source>
        <strain>cv. Columbia</strain>
    </source>
</reference>
<reference key="2">
    <citation type="submission" date="1997-07" db="EMBL/GenBank/DDBJ databases">
        <title>Arabidopsis Ahl encodes a PAP-specific phosphatase that is sensitive to toxic metal ions.</title>
        <authorList>
            <person name="Cheong J.-J."/>
            <person name="Kwon H.-B."/>
            <person name="Goodman H.M."/>
        </authorList>
    </citation>
    <scope>NUCLEOTIDE SEQUENCE [GENOMIC DNA]</scope>
    <source>
        <strain>cv. Landsberg erecta</strain>
    </source>
</reference>
<reference key="3">
    <citation type="journal article" date="1999" name="Plant J.">
        <title>The Arabidopsis HAL2-like gene family includes a novel sodium-sensitive phosphatase.</title>
        <authorList>
            <person name="Gil-Mascarell R."/>
            <person name="Lopez-Coronado J.M."/>
            <person name="Belles J.M."/>
            <person name="Serrano R."/>
            <person name="Rodriguez P.L."/>
        </authorList>
    </citation>
    <scope>NUCLEOTIDE SEQUENCE [MRNA]</scope>
    <scope>FUNCTION</scope>
    <scope>CATALYTIC ACTIVITY</scope>
    <scope>COFACTOR</scope>
    <scope>SUBSTRATE SPECIFICITY</scope>
    <scope>BIOPHYSICOCHEMICAL PROPERTIES</scope>
    <scope>ACTIVITY REGULATION</scope>
    <source>
        <strain>cv. Columbia</strain>
    </source>
</reference>
<reference key="4">
    <citation type="submission" date="1999-04" db="EMBL/GenBank/DDBJ databases">
        <title>Structural analysis of Arabidopsis thaliana chromosome 5. XI.</title>
        <authorList>
            <person name="Kaneko T."/>
            <person name="Katoh T."/>
            <person name="Asamizu E."/>
            <person name="Sato S."/>
            <person name="Nakamura Y."/>
            <person name="Kotani H."/>
            <person name="Tabata S."/>
        </authorList>
    </citation>
    <scope>NUCLEOTIDE SEQUENCE [LARGE SCALE GENOMIC DNA]</scope>
    <source>
        <strain>cv. Columbia</strain>
    </source>
</reference>
<reference key="5">
    <citation type="journal article" date="2017" name="Plant J.">
        <title>Araport11: a complete reannotation of the Arabidopsis thaliana reference genome.</title>
        <authorList>
            <person name="Cheng C.Y."/>
            <person name="Krishnakumar V."/>
            <person name="Chan A.P."/>
            <person name="Thibaud-Nissen F."/>
            <person name="Schobel S."/>
            <person name="Town C.D."/>
        </authorList>
    </citation>
    <scope>GENOME REANNOTATION</scope>
    <source>
        <strain>cv. Columbia</strain>
    </source>
</reference>
<reference key="6">
    <citation type="journal article" date="2003" name="Science">
        <title>Empirical analysis of transcriptional activity in the Arabidopsis genome.</title>
        <authorList>
            <person name="Yamada K."/>
            <person name="Lim J."/>
            <person name="Dale J.M."/>
            <person name="Chen H."/>
            <person name="Shinn P."/>
            <person name="Palm C.J."/>
            <person name="Southwick A.M."/>
            <person name="Wu H.C."/>
            <person name="Kim C.J."/>
            <person name="Nguyen M."/>
            <person name="Pham P.K."/>
            <person name="Cheuk R.F."/>
            <person name="Karlin-Newmann G."/>
            <person name="Liu S.X."/>
            <person name="Lam B."/>
            <person name="Sakano H."/>
            <person name="Wu T."/>
            <person name="Yu G."/>
            <person name="Miranda M."/>
            <person name="Quach H.L."/>
            <person name="Tripp M."/>
            <person name="Chang C.H."/>
            <person name="Lee J.M."/>
            <person name="Toriumi M.J."/>
            <person name="Chan M.M."/>
            <person name="Tang C.C."/>
            <person name="Onodera C.S."/>
            <person name="Deng J.M."/>
            <person name="Akiyama K."/>
            <person name="Ansari Y."/>
            <person name="Arakawa T."/>
            <person name="Banh J."/>
            <person name="Banno F."/>
            <person name="Bowser L."/>
            <person name="Brooks S.Y."/>
            <person name="Carninci P."/>
            <person name="Chao Q."/>
            <person name="Choy N."/>
            <person name="Enju A."/>
            <person name="Goldsmith A.D."/>
            <person name="Gurjal M."/>
            <person name="Hansen N.F."/>
            <person name="Hayashizaki Y."/>
            <person name="Johnson-Hopson C."/>
            <person name="Hsuan V.W."/>
            <person name="Iida K."/>
            <person name="Karnes M."/>
            <person name="Khan S."/>
            <person name="Koesema E."/>
            <person name="Ishida J."/>
            <person name="Jiang P.X."/>
            <person name="Jones T."/>
            <person name="Kawai J."/>
            <person name="Kamiya A."/>
            <person name="Meyers C."/>
            <person name="Nakajima M."/>
            <person name="Narusaka M."/>
            <person name="Seki M."/>
            <person name="Sakurai T."/>
            <person name="Satou M."/>
            <person name="Tamse R."/>
            <person name="Vaysberg M."/>
            <person name="Wallender E.K."/>
            <person name="Wong C."/>
            <person name="Yamamura Y."/>
            <person name="Yuan S."/>
            <person name="Shinozaki K."/>
            <person name="Davis R.W."/>
            <person name="Theologis A."/>
            <person name="Ecker J.R."/>
        </authorList>
    </citation>
    <scope>NUCLEOTIDE SEQUENCE [LARGE SCALE MRNA]</scope>
    <source>
        <strain>cv. Columbia</strain>
    </source>
</reference>
<reference key="7">
    <citation type="submission" date="2002-03" db="EMBL/GenBank/DDBJ databases">
        <title>Full-length cDNA from Arabidopsis thaliana.</title>
        <authorList>
            <person name="Brover V.V."/>
            <person name="Troukhan M.E."/>
            <person name="Alexandrov N.A."/>
            <person name="Lu Y.-P."/>
            <person name="Flavell R.B."/>
            <person name="Feldmann K.A."/>
        </authorList>
    </citation>
    <scope>NUCLEOTIDE SEQUENCE [LARGE SCALE MRNA]</scope>
</reference>
<dbReference type="EC" id="3.1.3.7" evidence="3"/>
<dbReference type="EMBL" id="U55205">
    <property type="protein sequence ID" value="AAB52964.1"/>
    <property type="molecule type" value="mRNA"/>
</dbReference>
<dbReference type="EMBL" id="AF016644">
    <property type="protein sequence ID" value="AAB94051.1"/>
    <property type="molecule type" value="Genomic_DNA"/>
</dbReference>
<dbReference type="EMBL" id="AB026634">
    <property type="protein sequence ID" value="BAA97512.1"/>
    <property type="molecule type" value="Genomic_DNA"/>
</dbReference>
<dbReference type="EMBL" id="CP002688">
    <property type="protein sequence ID" value="AED96491.1"/>
    <property type="molecule type" value="Genomic_DNA"/>
</dbReference>
<dbReference type="EMBL" id="AY045848">
    <property type="protein sequence ID" value="AAK76522.1"/>
    <property type="molecule type" value="mRNA"/>
</dbReference>
<dbReference type="EMBL" id="AY091377">
    <property type="protein sequence ID" value="AAM14316.1"/>
    <property type="molecule type" value="mRNA"/>
</dbReference>
<dbReference type="EMBL" id="AY086488">
    <property type="protein sequence ID" value="AAM63490.1"/>
    <property type="molecule type" value="mRNA"/>
</dbReference>
<dbReference type="RefSeq" id="NP_200250.1">
    <property type="nucleotide sequence ID" value="NM_124819.3"/>
</dbReference>
<dbReference type="SMR" id="Q38945"/>
<dbReference type="BioGRID" id="20771">
    <property type="interactions" value="5"/>
</dbReference>
<dbReference type="FunCoup" id="Q38945">
    <property type="interactions" value="100"/>
</dbReference>
<dbReference type="IntAct" id="Q38945">
    <property type="interactions" value="4"/>
</dbReference>
<dbReference type="STRING" id="3702.Q38945"/>
<dbReference type="PaxDb" id="3702-AT5G54390.1"/>
<dbReference type="ProteomicsDB" id="220405"/>
<dbReference type="EnsemblPlants" id="AT5G54390.1">
    <property type="protein sequence ID" value="AT5G54390.1"/>
    <property type="gene ID" value="AT5G54390"/>
</dbReference>
<dbReference type="GeneID" id="835527"/>
<dbReference type="Gramene" id="AT5G54390.1">
    <property type="protein sequence ID" value="AT5G54390.1"/>
    <property type="gene ID" value="AT5G54390"/>
</dbReference>
<dbReference type="KEGG" id="ath:AT5G54390"/>
<dbReference type="Araport" id="AT5G54390"/>
<dbReference type="TAIR" id="AT5G54390">
    <property type="gene designation" value="HL"/>
</dbReference>
<dbReference type="eggNOG" id="KOG1528">
    <property type="taxonomic scope" value="Eukaryota"/>
</dbReference>
<dbReference type="HOGENOM" id="CLU_033446_3_0_1"/>
<dbReference type="InParanoid" id="Q38945"/>
<dbReference type="OMA" id="WSSHVRY"/>
<dbReference type="OrthoDB" id="411145at2759"/>
<dbReference type="PhylomeDB" id="Q38945"/>
<dbReference type="BioCyc" id="ARA:AT5G54390-MONOMER"/>
<dbReference type="BRENDA" id="3.1.3.7">
    <property type="organism ID" value="399"/>
</dbReference>
<dbReference type="PRO" id="PR:Q38945"/>
<dbReference type="Proteomes" id="UP000006548">
    <property type="component" value="Chromosome 5"/>
</dbReference>
<dbReference type="ExpressionAtlas" id="Q38945">
    <property type="expression patterns" value="baseline and differential"/>
</dbReference>
<dbReference type="GO" id="GO:0008441">
    <property type="term" value="F:3'(2'),5'-bisphosphate nucleotidase activity"/>
    <property type="evidence" value="ECO:0000314"/>
    <property type="project" value="TAIR"/>
</dbReference>
<dbReference type="GO" id="GO:0046872">
    <property type="term" value="F:metal ion binding"/>
    <property type="evidence" value="ECO:0007669"/>
    <property type="project" value="UniProtKB-KW"/>
</dbReference>
<dbReference type="GO" id="GO:0046854">
    <property type="term" value="P:phosphatidylinositol phosphate biosynthetic process"/>
    <property type="evidence" value="ECO:0007669"/>
    <property type="project" value="InterPro"/>
</dbReference>
<dbReference type="GO" id="GO:0006790">
    <property type="term" value="P:sulfur compound metabolic process"/>
    <property type="evidence" value="ECO:0007669"/>
    <property type="project" value="InterPro"/>
</dbReference>
<dbReference type="CDD" id="cd01517">
    <property type="entry name" value="PAP_phosphatase"/>
    <property type="match status" value="1"/>
</dbReference>
<dbReference type="FunFam" id="3.40.190.80:FF:000003">
    <property type="entry name" value="PAP-specific phosphatase HAL2-like"/>
    <property type="match status" value="1"/>
</dbReference>
<dbReference type="Gene3D" id="3.40.190.80">
    <property type="match status" value="1"/>
</dbReference>
<dbReference type="Gene3D" id="3.30.540.10">
    <property type="entry name" value="Fructose-1,6-Bisphosphatase, subunit A, domain 1"/>
    <property type="match status" value="1"/>
</dbReference>
<dbReference type="InterPro" id="IPR006239">
    <property type="entry name" value="DPNP"/>
</dbReference>
<dbReference type="InterPro" id="IPR020583">
    <property type="entry name" value="Inositol_monoP_metal-BS"/>
</dbReference>
<dbReference type="InterPro" id="IPR051090">
    <property type="entry name" value="Inositol_monoP_superfamily"/>
</dbReference>
<dbReference type="InterPro" id="IPR000760">
    <property type="entry name" value="Inositol_monophosphatase-like"/>
</dbReference>
<dbReference type="InterPro" id="IPR020550">
    <property type="entry name" value="Inositol_monophosphatase_CS"/>
</dbReference>
<dbReference type="NCBIfam" id="TIGR01330">
    <property type="entry name" value="bisphos_HAL2"/>
    <property type="match status" value="1"/>
</dbReference>
<dbReference type="PANTHER" id="PTHR43200:SF24">
    <property type="entry name" value="PAP-SPECIFIC PHOSPHATASE HAL2-LIKE"/>
    <property type="match status" value="1"/>
</dbReference>
<dbReference type="PANTHER" id="PTHR43200">
    <property type="entry name" value="PHOSPHATASE"/>
    <property type="match status" value="1"/>
</dbReference>
<dbReference type="Pfam" id="PF00459">
    <property type="entry name" value="Inositol_P"/>
    <property type="match status" value="1"/>
</dbReference>
<dbReference type="SUPFAM" id="SSF56655">
    <property type="entry name" value="Carbohydrate phosphatase"/>
    <property type="match status" value="1"/>
</dbReference>
<dbReference type="PROSITE" id="PS00629">
    <property type="entry name" value="IMP_1"/>
    <property type="match status" value="1"/>
</dbReference>
<dbReference type="PROSITE" id="PS00630">
    <property type="entry name" value="IMP_2"/>
    <property type="match status" value="1"/>
</dbReference>
<accession>Q38945</accession>
<accession>O48892</accession>
<organism>
    <name type="scientific">Arabidopsis thaliana</name>
    <name type="common">Mouse-ear cress</name>
    <dbReference type="NCBI Taxonomy" id="3702"/>
    <lineage>
        <taxon>Eukaryota</taxon>
        <taxon>Viridiplantae</taxon>
        <taxon>Streptophyta</taxon>
        <taxon>Embryophyta</taxon>
        <taxon>Tracheophyta</taxon>
        <taxon>Spermatophyta</taxon>
        <taxon>Magnoliopsida</taxon>
        <taxon>eudicotyledons</taxon>
        <taxon>Gunneridae</taxon>
        <taxon>Pentapetalae</taxon>
        <taxon>rosids</taxon>
        <taxon>malvids</taxon>
        <taxon>Brassicales</taxon>
        <taxon>Brassicaceae</taxon>
        <taxon>Camelineae</taxon>
        <taxon>Arabidopsis</taxon>
    </lineage>
</organism>
<keyword id="KW-0106">Calcium</keyword>
<keyword id="KW-0378">Hydrolase</keyword>
<keyword id="KW-0452">Lithium</keyword>
<keyword id="KW-0460">Magnesium</keyword>
<keyword id="KW-0479">Metal-binding</keyword>
<keyword id="KW-1185">Reference proteome</keyword>